<reference key="1">
    <citation type="journal article" date="2011" name="Appl. Environ. Microbiol.">
        <title>Genomic potential of Marinobacter aquaeolei, a biogeochemical 'opportunitroph'.</title>
        <authorList>
            <person name="Singer E."/>
            <person name="Webb E.A."/>
            <person name="Nelson W.C."/>
            <person name="Heidelberg J.F."/>
            <person name="Ivanova N."/>
            <person name="Pati A."/>
            <person name="Edwards K.J."/>
        </authorList>
    </citation>
    <scope>NUCLEOTIDE SEQUENCE [LARGE SCALE GENOMIC DNA]</scope>
    <source>
        <strain>ATCC 700491 / DSM 11845 / VT8</strain>
    </source>
</reference>
<dbReference type="EC" id="2.5.1.61" evidence="1"/>
<dbReference type="EMBL" id="CP000514">
    <property type="protein sequence ID" value="ABM17588.1"/>
    <property type="molecule type" value="Genomic_DNA"/>
</dbReference>
<dbReference type="RefSeq" id="WP_011784032.1">
    <property type="nucleotide sequence ID" value="NC_008740.1"/>
</dbReference>
<dbReference type="SMR" id="A1TXW9"/>
<dbReference type="STRING" id="351348.Maqu_0487"/>
<dbReference type="KEGG" id="maq:Maqu_0487"/>
<dbReference type="eggNOG" id="COG0181">
    <property type="taxonomic scope" value="Bacteria"/>
</dbReference>
<dbReference type="HOGENOM" id="CLU_019704_0_2_6"/>
<dbReference type="OrthoDB" id="9810298at2"/>
<dbReference type="UniPathway" id="UPA00251">
    <property type="reaction ID" value="UER00319"/>
</dbReference>
<dbReference type="Proteomes" id="UP000000998">
    <property type="component" value="Chromosome"/>
</dbReference>
<dbReference type="GO" id="GO:0005737">
    <property type="term" value="C:cytoplasm"/>
    <property type="evidence" value="ECO:0007669"/>
    <property type="project" value="TreeGrafter"/>
</dbReference>
<dbReference type="GO" id="GO:0004418">
    <property type="term" value="F:hydroxymethylbilane synthase activity"/>
    <property type="evidence" value="ECO:0007669"/>
    <property type="project" value="UniProtKB-UniRule"/>
</dbReference>
<dbReference type="GO" id="GO:0006782">
    <property type="term" value="P:protoporphyrinogen IX biosynthetic process"/>
    <property type="evidence" value="ECO:0007669"/>
    <property type="project" value="UniProtKB-UniRule"/>
</dbReference>
<dbReference type="CDD" id="cd13646">
    <property type="entry name" value="PBP2_EcHMBS_like"/>
    <property type="match status" value="1"/>
</dbReference>
<dbReference type="FunFam" id="3.30.160.40:FF:000002">
    <property type="entry name" value="Porphobilinogen deaminase"/>
    <property type="match status" value="1"/>
</dbReference>
<dbReference type="FunFam" id="3.40.190.10:FF:000004">
    <property type="entry name" value="Porphobilinogen deaminase"/>
    <property type="match status" value="1"/>
</dbReference>
<dbReference type="FunFam" id="3.40.190.10:FF:000005">
    <property type="entry name" value="Porphobilinogen deaminase"/>
    <property type="match status" value="1"/>
</dbReference>
<dbReference type="Gene3D" id="3.40.190.10">
    <property type="entry name" value="Periplasmic binding protein-like II"/>
    <property type="match status" value="2"/>
</dbReference>
<dbReference type="Gene3D" id="3.30.160.40">
    <property type="entry name" value="Porphobilinogen deaminase, C-terminal domain"/>
    <property type="match status" value="1"/>
</dbReference>
<dbReference type="HAMAP" id="MF_00260">
    <property type="entry name" value="Porphobil_deam"/>
    <property type="match status" value="1"/>
</dbReference>
<dbReference type="InterPro" id="IPR000860">
    <property type="entry name" value="HemC"/>
</dbReference>
<dbReference type="InterPro" id="IPR022419">
    <property type="entry name" value="Porphobilin_deaminase_cofac_BS"/>
</dbReference>
<dbReference type="InterPro" id="IPR022417">
    <property type="entry name" value="Porphobilin_deaminase_N"/>
</dbReference>
<dbReference type="InterPro" id="IPR022418">
    <property type="entry name" value="Porphobilinogen_deaminase_C"/>
</dbReference>
<dbReference type="InterPro" id="IPR036803">
    <property type="entry name" value="Porphobilinogen_deaminase_C_sf"/>
</dbReference>
<dbReference type="NCBIfam" id="TIGR00212">
    <property type="entry name" value="hemC"/>
    <property type="match status" value="1"/>
</dbReference>
<dbReference type="PANTHER" id="PTHR11557">
    <property type="entry name" value="PORPHOBILINOGEN DEAMINASE"/>
    <property type="match status" value="1"/>
</dbReference>
<dbReference type="PANTHER" id="PTHR11557:SF0">
    <property type="entry name" value="PORPHOBILINOGEN DEAMINASE"/>
    <property type="match status" value="1"/>
</dbReference>
<dbReference type="Pfam" id="PF01379">
    <property type="entry name" value="Porphobil_deam"/>
    <property type="match status" value="1"/>
</dbReference>
<dbReference type="Pfam" id="PF03900">
    <property type="entry name" value="Porphobil_deamC"/>
    <property type="match status" value="1"/>
</dbReference>
<dbReference type="PIRSF" id="PIRSF001438">
    <property type="entry name" value="4pyrrol_synth_OHMeBilane_synth"/>
    <property type="match status" value="1"/>
</dbReference>
<dbReference type="PRINTS" id="PR00151">
    <property type="entry name" value="PORPHBDMNASE"/>
</dbReference>
<dbReference type="SUPFAM" id="SSF53850">
    <property type="entry name" value="Periplasmic binding protein-like II"/>
    <property type="match status" value="1"/>
</dbReference>
<dbReference type="SUPFAM" id="SSF54782">
    <property type="entry name" value="Porphobilinogen deaminase (hydroxymethylbilane synthase), C-terminal domain"/>
    <property type="match status" value="1"/>
</dbReference>
<dbReference type="PROSITE" id="PS00533">
    <property type="entry name" value="PORPHOBILINOGEN_DEAM"/>
    <property type="match status" value="1"/>
</dbReference>
<protein>
    <recommendedName>
        <fullName evidence="1">Porphobilinogen deaminase</fullName>
        <shortName evidence="1">PBG</shortName>
        <ecNumber evidence="1">2.5.1.61</ecNumber>
    </recommendedName>
    <alternativeName>
        <fullName evidence="1">Hydroxymethylbilane synthase</fullName>
        <shortName evidence="1">HMBS</shortName>
    </alternativeName>
    <alternativeName>
        <fullName evidence="1">Pre-uroporphyrinogen synthase</fullName>
    </alternativeName>
</protein>
<accession>A1TXW9</accession>
<sequence>MSKRTLRIATRSSALALWQAEFIKAELERLHDNVDVELIKIKTQGDKILDVPLAKIGGKGLFVKELEEAMLDGRADLAVHSMKDVPMEFPEGLGLVAICEREDPTDAFVSNQYEHIDQLPEGAVVGTASLRREAQLRANRPDLQIKVLRGNVNTRLAKLDAGEYDAIVLASSGLKRLGFHDRIRYCLPDTFSLPAVGQGALGIECRVGDTELLELIDPLNHTDTWDRVSAERALNRRLEGGCQVPIAAYALLEDDNTLWLRGLVGAVDGTQIFRVEGRAPRAEGERLGRELAEQLLSMGADKVLAEIYGHTPR</sequence>
<organism>
    <name type="scientific">Marinobacter nauticus (strain ATCC 700491 / DSM 11845 / VT8)</name>
    <name type="common">Marinobacter aquaeolei</name>
    <dbReference type="NCBI Taxonomy" id="351348"/>
    <lineage>
        <taxon>Bacteria</taxon>
        <taxon>Pseudomonadati</taxon>
        <taxon>Pseudomonadota</taxon>
        <taxon>Gammaproteobacteria</taxon>
        <taxon>Pseudomonadales</taxon>
        <taxon>Marinobacteraceae</taxon>
        <taxon>Marinobacter</taxon>
    </lineage>
</organism>
<keyword id="KW-0627">Porphyrin biosynthesis</keyword>
<keyword id="KW-0808">Transferase</keyword>
<name>HEM3_MARN8</name>
<gene>
    <name evidence="1" type="primary">hemC</name>
    <name type="ordered locus">Maqu_0487</name>
</gene>
<feature type="chain" id="PRO_1000047752" description="Porphobilinogen deaminase">
    <location>
        <begin position="1"/>
        <end position="313"/>
    </location>
</feature>
<feature type="modified residue" description="S-(dipyrrolylmethanemethyl)cysteine" evidence="1">
    <location>
        <position position="242"/>
    </location>
</feature>
<comment type="function">
    <text evidence="1">Tetrapolymerization of the monopyrrole PBG into the hydroxymethylbilane pre-uroporphyrinogen in several discrete steps.</text>
</comment>
<comment type="catalytic activity">
    <reaction evidence="1">
        <text>4 porphobilinogen + H2O = hydroxymethylbilane + 4 NH4(+)</text>
        <dbReference type="Rhea" id="RHEA:13185"/>
        <dbReference type="ChEBI" id="CHEBI:15377"/>
        <dbReference type="ChEBI" id="CHEBI:28938"/>
        <dbReference type="ChEBI" id="CHEBI:57845"/>
        <dbReference type="ChEBI" id="CHEBI:58126"/>
        <dbReference type="EC" id="2.5.1.61"/>
    </reaction>
</comment>
<comment type="cofactor">
    <cofactor evidence="1">
        <name>dipyrromethane</name>
        <dbReference type="ChEBI" id="CHEBI:60342"/>
    </cofactor>
    <text evidence="1">Binds 1 dipyrromethane group covalently.</text>
</comment>
<comment type="pathway">
    <text evidence="1">Porphyrin-containing compound metabolism; protoporphyrin-IX biosynthesis; coproporphyrinogen-III from 5-aminolevulinate: step 2/4.</text>
</comment>
<comment type="subunit">
    <text evidence="1">Monomer.</text>
</comment>
<comment type="miscellaneous">
    <text evidence="1">The porphobilinogen subunits are added to the dipyrromethane group.</text>
</comment>
<comment type="similarity">
    <text evidence="1">Belongs to the HMBS family.</text>
</comment>
<evidence type="ECO:0000255" key="1">
    <source>
        <dbReference type="HAMAP-Rule" id="MF_00260"/>
    </source>
</evidence>
<proteinExistence type="inferred from homology"/>